<protein>
    <recommendedName>
        <fullName evidence="1">Acyl-[acyl-carrier-protein]--UDP-N-acetylglucosamine O-acyltransferase</fullName>
        <shortName evidence="1">UDP-N-acetylglucosamine acyltransferase</shortName>
        <ecNumber evidence="1">2.3.1.129</ecNumber>
    </recommendedName>
</protein>
<feature type="chain" id="PRO_1000122714" description="Acyl-[acyl-carrier-protein]--UDP-N-acetylglucosamine O-acyltransferase">
    <location>
        <begin position="1"/>
        <end position="264"/>
    </location>
</feature>
<dbReference type="EC" id="2.3.1.129" evidence="1"/>
<dbReference type="EMBL" id="CP001013">
    <property type="protein sequence ID" value="ACB35103.1"/>
    <property type="molecule type" value="Genomic_DNA"/>
</dbReference>
<dbReference type="RefSeq" id="WP_012347857.1">
    <property type="nucleotide sequence ID" value="NC_010524.1"/>
</dbReference>
<dbReference type="SMR" id="B1XXI3"/>
<dbReference type="STRING" id="395495.Lcho_2838"/>
<dbReference type="KEGG" id="lch:Lcho_2838"/>
<dbReference type="eggNOG" id="COG1043">
    <property type="taxonomic scope" value="Bacteria"/>
</dbReference>
<dbReference type="HOGENOM" id="CLU_061249_0_0_4"/>
<dbReference type="OrthoDB" id="9807278at2"/>
<dbReference type="UniPathway" id="UPA00359">
    <property type="reaction ID" value="UER00477"/>
</dbReference>
<dbReference type="Proteomes" id="UP000001693">
    <property type="component" value="Chromosome"/>
</dbReference>
<dbReference type="GO" id="GO:0005737">
    <property type="term" value="C:cytoplasm"/>
    <property type="evidence" value="ECO:0007669"/>
    <property type="project" value="UniProtKB-SubCell"/>
</dbReference>
<dbReference type="GO" id="GO:0016020">
    <property type="term" value="C:membrane"/>
    <property type="evidence" value="ECO:0007669"/>
    <property type="project" value="GOC"/>
</dbReference>
<dbReference type="GO" id="GO:0008780">
    <property type="term" value="F:acyl-[acyl-carrier-protein]-UDP-N-acetylglucosamine O-acyltransferase activity"/>
    <property type="evidence" value="ECO:0007669"/>
    <property type="project" value="UniProtKB-UniRule"/>
</dbReference>
<dbReference type="GO" id="GO:0009245">
    <property type="term" value="P:lipid A biosynthetic process"/>
    <property type="evidence" value="ECO:0007669"/>
    <property type="project" value="UniProtKB-UniRule"/>
</dbReference>
<dbReference type="CDD" id="cd03351">
    <property type="entry name" value="LbH_UDP-GlcNAc_AT"/>
    <property type="match status" value="1"/>
</dbReference>
<dbReference type="Gene3D" id="2.160.10.10">
    <property type="entry name" value="Hexapeptide repeat proteins"/>
    <property type="match status" value="1"/>
</dbReference>
<dbReference type="Gene3D" id="1.20.1180.10">
    <property type="entry name" value="Udp N-acetylglucosamine O-acyltransferase, C-terminal domain"/>
    <property type="match status" value="1"/>
</dbReference>
<dbReference type="HAMAP" id="MF_00387">
    <property type="entry name" value="LpxA"/>
    <property type="match status" value="1"/>
</dbReference>
<dbReference type="InterPro" id="IPR029098">
    <property type="entry name" value="Acetyltransf_C"/>
</dbReference>
<dbReference type="InterPro" id="IPR037157">
    <property type="entry name" value="Acetyltransf_C_sf"/>
</dbReference>
<dbReference type="InterPro" id="IPR001451">
    <property type="entry name" value="Hexapep"/>
</dbReference>
<dbReference type="InterPro" id="IPR018357">
    <property type="entry name" value="Hexapep_transf_CS"/>
</dbReference>
<dbReference type="InterPro" id="IPR010137">
    <property type="entry name" value="Lipid_A_LpxA"/>
</dbReference>
<dbReference type="InterPro" id="IPR011004">
    <property type="entry name" value="Trimer_LpxA-like_sf"/>
</dbReference>
<dbReference type="NCBIfam" id="TIGR01852">
    <property type="entry name" value="lipid_A_lpxA"/>
    <property type="match status" value="1"/>
</dbReference>
<dbReference type="NCBIfam" id="NF003657">
    <property type="entry name" value="PRK05289.1"/>
    <property type="match status" value="1"/>
</dbReference>
<dbReference type="PANTHER" id="PTHR43480">
    <property type="entry name" value="ACYL-[ACYL-CARRIER-PROTEIN]--UDP-N-ACETYLGLUCOSAMINE O-ACYLTRANSFERASE"/>
    <property type="match status" value="1"/>
</dbReference>
<dbReference type="PANTHER" id="PTHR43480:SF1">
    <property type="entry name" value="ACYL-[ACYL-CARRIER-PROTEIN]--UDP-N-ACETYLGLUCOSAMINE O-ACYLTRANSFERASE, MITOCHONDRIAL-RELATED"/>
    <property type="match status" value="1"/>
</dbReference>
<dbReference type="Pfam" id="PF13720">
    <property type="entry name" value="Acetyltransf_11"/>
    <property type="match status" value="1"/>
</dbReference>
<dbReference type="Pfam" id="PF00132">
    <property type="entry name" value="Hexapep"/>
    <property type="match status" value="2"/>
</dbReference>
<dbReference type="PIRSF" id="PIRSF000456">
    <property type="entry name" value="UDP-GlcNAc_acltr"/>
    <property type="match status" value="1"/>
</dbReference>
<dbReference type="SUPFAM" id="SSF51161">
    <property type="entry name" value="Trimeric LpxA-like enzymes"/>
    <property type="match status" value="1"/>
</dbReference>
<dbReference type="PROSITE" id="PS00101">
    <property type="entry name" value="HEXAPEP_TRANSFERASES"/>
    <property type="match status" value="1"/>
</dbReference>
<reference key="1">
    <citation type="submission" date="2008-03" db="EMBL/GenBank/DDBJ databases">
        <title>Complete sequence of Leptothrix cholodnii SP-6.</title>
        <authorList>
            <consortium name="US DOE Joint Genome Institute"/>
            <person name="Copeland A."/>
            <person name="Lucas S."/>
            <person name="Lapidus A."/>
            <person name="Glavina del Rio T."/>
            <person name="Dalin E."/>
            <person name="Tice H."/>
            <person name="Bruce D."/>
            <person name="Goodwin L."/>
            <person name="Pitluck S."/>
            <person name="Chertkov O."/>
            <person name="Brettin T."/>
            <person name="Detter J.C."/>
            <person name="Han C."/>
            <person name="Kuske C.R."/>
            <person name="Schmutz J."/>
            <person name="Larimer F."/>
            <person name="Land M."/>
            <person name="Hauser L."/>
            <person name="Kyrpides N."/>
            <person name="Lykidis A."/>
            <person name="Emerson D."/>
            <person name="Richardson P."/>
        </authorList>
    </citation>
    <scope>NUCLEOTIDE SEQUENCE [LARGE SCALE GENOMIC DNA]</scope>
    <source>
        <strain>ATCC 51168 / LMG 8142 / SP-6</strain>
    </source>
</reference>
<evidence type="ECO:0000255" key="1">
    <source>
        <dbReference type="HAMAP-Rule" id="MF_00387"/>
    </source>
</evidence>
<comment type="function">
    <text evidence="1">Involved in the biosynthesis of lipid A, a phosphorylated glycolipid that anchors the lipopolysaccharide to the outer membrane of the cell.</text>
</comment>
<comment type="catalytic activity">
    <reaction evidence="1">
        <text>a (3R)-hydroxyacyl-[ACP] + UDP-N-acetyl-alpha-D-glucosamine = a UDP-3-O-[(3R)-3-hydroxyacyl]-N-acetyl-alpha-D-glucosamine + holo-[ACP]</text>
        <dbReference type="Rhea" id="RHEA:67812"/>
        <dbReference type="Rhea" id="RHEA-COMP:9685"/>
        <dbReference type="Rhea" id="RHEA-COMP:9945"/>
        <dbReference type="ChEBI" id="CHEBI:57705"/>
        <dbReference type="ChEBI" id="CHEBI:64479"/>
        <dbReference type="ChEBI" id="CHEBI:78827"/>
        <dbReference type="ChEBI" id="CHEBI:173225"/>
        <dbReference type="EC" id="2.3.1.129"/>
    </reaction>
</comment>
<comment type="pathway">
    <text evidence="1">Glycolipid biosynthesis; lipid IV(A) biosynthesis; lipid IV(A) from (3R)-3-hydroxytetradecanoyl-[acyl-carrier-protein] and UDP-N-acetyl-alpha-D-glucosamine: step 1/6.</text>
</comment>
<comment type="subunit">
    <text evidence="1">Homotrimer.</text>
</comment>
<comment type="subcellular location">
    <subcellularLocation>
        <location evidence="1">Cytoplasm</location>
    </subcellularLocation>
</comment>
<comment type="similarity">
    <text evidence="1">Belongs to the transferase hexapeptide repeat family. LpxA subfamily.</text>
</comment>
<organism>
    <name type="scientific">Leptothrix cholodnii (strain ATCC 51168 / LMG 8142 / SP-6)</name>
    <name type="common">Leptothrix discophora (strain SP-6)</name>
    <dbReference type="NCBI Taxonomy" id="395495"/>
    <lineage>
        <taxon>Bacteria</taxon>
        <taxon>Pseudomonadati</taxon>
        <taxon>Pseudomonadota</taxon>
        <taxon>Betaproteobacteria</taxon>
        <taxon>Burkholderiales</taxon>
        <taxon>Sphaerotilaceae</taxon>
        <taxon>Leptothrix</taxon>
    </lineage>
</organism>
<sequence length="264" mass="28304">MAQIHPTAIVDPAAELADSVVVGAYAVIGPQVRIGAGTTIGPHCVIEGRTTIGVDNRFFQFSSIGALPQDMSHDGEITELVIGDRNTVREFCTFNTGTRKEDGVTRVGSDNWIMAYVHLAHDVRLGSHCVLANNATLAGHVHVGDWATIGGLSGVHQFVHIGAHAMIGFQGHVSQDVPPYMTVDGNPLTVRAVNLTGLRRRGFSNERIGVIRQMHKLLYRDSLTLEQAVEAVGALRGQQAEAQSDADIAVMLDFIAGAKRGLVR</sequence>
<accession>B1XXI3</accession>
<keyword id="KW-0012">Acyltransferase</keyword>
<keyword id="KW-0963">Cytoplasm</keyword>
<keyword id="KW-0441">Lipid A biosynthesis</keyword>
<keyword id="KW-0444">Lipid biosynthesis</keyword>
<keyword id="KW-0443">Lipid metabolism</keyword>
<keyword id="KW-1185">Reference proteome</keyword>
<keyword id="KW-0677">Repeat</keyword>
<keyword id="KW-0808">Transferase</keyword>
<proteinExistence type="inferred from homology"/>
<name>LPXA_LEPCP</name>
<gene>
    <name evidence="1" type="primary">lpxA</name>
    <name type="ordered locus">Lcho_2838</name>
</gene>